<proteinExistence type="inferred from homology"/>
<sequence length="506" mass="55652">MAEKPKKPQKLKARLPRGLEDRDPAAIRATREMVEKIRAVYELYGFEPVETPAMEYTDALGKFLPDQDRPNEGVFSFQDDDEQWISLRYDLTAPLARYVGERYGTDGLVLPYRSYRVGYVFRNEKPGPGRFRQFMQFDADTVGSATPAADAEICMMAADTMEALGVQRGQYVVKVNNRKVLDGVLEAIGLAGDENAARRLTVLRAIDKLDKFPADEVRKLLGPGRWDGGEEGKGDFTKGANLSAAEADVVLAITKPRDDWKEAIAAAEAYLAKSEVGQAGVSELEEIAKLVMASGYGADRIKIDPSVVRGLEYYTGPVYEVELLLDTKDEKGRPVRFGSVGGGGRYDGLVSRFRGEPVPATGFSIGVSRLQAALTLLGKLDTRPEFGPVVVTVFDRDRVADYQKMVASLRTAGIRAELYLGNPKNMGNQLKYADRRNSPCVIIQGSDEKARGELQIKDLIEGAKAAAAIASNQEWRESRPAQFSCAEADLVAKVREVLARHDVSWG</sequence>
<evidence type="ECO:0000250" key="1"/>
<evidence type="ECO:0000305" key="2"/>
<gene>
    <name type="primary">hisS</name>
    <name type="ordered locus">bll7457</name>
</gene>
<organism>
    <name type="scientific">Bradyrhizobium diazoefficiens (strain JCM 10833 / BCRC 13528 / IAM 13628 / NBRC 14792 / USDA 110)</name>
    <dbReference type="NCBI Taxonomy" id="224911"/>
    <lineage>
        <taxon>Bacteria</taxon>
        <taxon>Pseudomonadati</taxon>
        <taxon>Pseudomonadota</taxon>
        <taxon>Alphaproteobacteria</taxon>
        <taxon>Hyphomicrobiales</taxon>
        <taxon>Nitrobacteraceae</taxon>
        <taxon>Bradyrhizobium</taxon>
    </lineage>
</organism>
<dbReference type="EC" id="6.1.1.21"/>
<dbReference type="EMBL" id="BA000040">
    <property type="protein sequence ID" value="BAC52722.1"/>
    <property type="molecule type" value="Genomic_DNA"/>
</dbReference>
<dbReference type="RefSeq" id="NP_774097.1">
    <property type="nucleotide sequence ID" value="NC_004463.1"/>
</dbReference>
<dbReference type="RefSeq" id="WP_011090191.1">
    <property type="nucleotide sequence ID" value="NC_004463.1"/>
</dbReference>
<dbReference type="SMR" id="Q89DI2"/>
<dbReference type="FunCoup" id="Q89DI2">
    <property type="interactions" value="646"/>
</dbReference>
<dbReference type="STRING" id="224911.AAV28_34970"/>
<dbReference type="EnsemblBacteria" id="BAC52722">
    <property type="protein sequence ID" value="BAC52722"/>
    <property type="gene ID" value="BAC52722"/>
</dbReference>
<dbReference type="GeneID" id="46494414"/>
<dbReference type="KEGG" id="bja:bll7457"/>
<dbReference type="PATRIC" id="fig|224911.44.peg.7555"/>
<dbReference type="eggNOG" id="COG0124">
    <property type="taxonomic scope" value="Bacteria"/>
</dbReference>
<dbReference type="HOGENOM" id="CLU_025113_3_2_5"/>
<dbReference type="InParanoid" id="Q89DI2"/>
<dbReference type="OrthoDB" id="9800814at2"/>
<dbReference type="PhylomeDB" id="Q89DI2"/>
<dbReference type="Proteomes" id="UP000002526">
    <property type="component" value="Chromosome"/>
</dbReference>
<dbReference type="GO" id="GO:0005737">
    <property type="term" value="C:cytoplasm"/>
    <property type="evidence" value="ECO:0007669"/>
    <property type="project" value="UniProtKB-SubCell"/>
</dbReference>
<dbReference type="GO" id="GO:0005524">
    <property type="term" value="F:ATP binding"/>
    <property type="evidence" value="ECO:0007669"/>
    <property type="project" value="UniProtKB-UniRule"/>
</dbReference>
<dbReference type="GO" id="GO:0004821">
    <property type="term" value="F:histidine-tRNA ligase activity"/>
    <property type="evidence" value="ECO:0007669"/>
    <property type="project" value="UniProtKB-UniRule"/>
</dbReference>
<dbReference type="GO" id="GO:0006427">
    <property type="term" value="P:histidyl-tRNA aminoacylation"/>
    <property type="evidence" value="ECO:0007669"/>
    <property type="project" value="UniProtKB-UniRule"/>
</dbReference>
<dbReference type="CDD" id="cd00773">
    <property type="entry name" value="HisRS-like_core"/>
    <property type="match status" value="1"/>
</dbReference>
<dbReference type="FunFam" id="3.30.930.10:FF:000207">
    <property type="entry name" value="Histidine--tRNA ligase"/>
    <property type="match status" value="1"/>
</dbReference>
<dbReference type="FunFam" id="3.40.50.800:FF:000028">
    <property type="entry name" value="Histidine--tRNA ligase"/>
    <property type="match status" value="1"/>
</dbReference>
<dbReference type="Gene3D" id="3.40.50.800">
    <property type="entry name" value="Anticodon-binding domain"/>
    <property type="match status" value="1"/>
</dbReference>
<dbReference type="Gene3D" id="3.30.930.10">
    <property type="entry name" value="Bira Bifunctional Protein, Domain 2"/>
    <property type="match status" value="1"/>
</dbReference>
<dbReference type="HAMAP" id="MF_00127">
    <property type="entry name" value="His_tRNA_synth"/>
    <property type="match status" value="1"/>
</dbReference>
<dbReference type="InterPro" id="IPR006195">
    <property type="entry name" value="aa-tRNA-synth_II"/>
</dbReference>
<dbReference type="InterPro" id="IPR045864">
    <property type="entry name" value="aa-tRNA-synth_II/BPL/LPL"/>
</dbReference>
<dbReference type="InterPro" id="IPR004154">
    <property type="entry name" value="Anticodon-bd"/>
</dbReference>
<dbReference type="InterPro" id="IPR036621">
    <property type="entry name" value="Anticodon-bd_dom_sf"/>
</dbReference>
<dbReference type="InterPro" id="IPR015807">
    <property type="entry name" value="His-tRNA-ligase"/>
</dbReference>
<dbReference type="InterPro" id="IPR041715">
    <property type="entry name" value="HisRS-like_core"/>
</dbReference>
<dbReference type="InterPro" id="IPR004516">
    <property type="entry name" value="HisRS/HisZ"/>
</dbReference>
<dbReference type="NCBIfam" id="TIGR00442">
    <property type="entry name" value="hisS"/>
    <property type="match status" value="1"/>
</dbReference>
<dbReference type="PANTHER" id="PTHR11476:SF7">
    <property type="entry name" value="HISTIDINE--TRNA LIGASE"/>
    <property type="match status" value="1"/>
</dbReference>
<dbReference type="PANTHER" id="PTHR11476">
    <property type="entry name" value="HISTIDYL-TRNA SYNTHETASE"/>
    <property type="match status" value="1"/>
</dbReference>
<dbReference type="Pfam" id="PF03129">
    <property type="entry name" value="HGTP_anticodon"/>
    <property type="match status" value="1"/>
</dbReference>
<dbReference type="Pfam" id="PF13393">
    <property type="entry name" value="tRNA-synt_His"/>
    <property type="match status" value="1"/>
</dbReference>
<dbReference type="PIRSF" id="PIRSF001549">
    <property type="entry name" value="His-tRNA_synth"/>
    <property type="match status" value="1"/>
</dbReference>
<dbReference type="SUPFAM" id="SSF52954">
    <property type="entry name" value="Class II aaRS ABD-related"/>
    <property type="match status" value="1"/>
</dbReference>
<dbReference type="SUPFAM" id="SSF55681">
    <property type="entry name" value="Class II aaRS and biotin synthetases"/>
    <property type="match status" value="1"/>
</dbReference>
<dbReference type="PROSITE" id="PS50862">
    <property type="entry name" value="AA_TRNA_LIGASE_II"/>
    <property type="match status" value="1"/>
</dbReference>
<name>SYH_BRADU</name>
<comment type="catalytic activity">
    <reaction>
        <text>tRNA(His) + L-histidine + ATP = L-histidyl-tRNA(His) + AMP + diphosphate + H(+)</text>
        <dbReference type="Rhea" id="RHEA:17313"/>
        <dbReference type="Rhea" id="RHEA-COMP:9665"/>
        <dbReference type="Rhea" id="RHEA-COMP:9689"/>
        <dbReference type="ChEBI" id="CHEBI:15378"/>
        <dbReference type="ChEBI" id="CHEBI:30616"/>
        <dbReference type="ChEBI" id="CHEBI:33019"/>
        <dbReference type="ChEBI" id="CHEBI:57595"/>
        <dbReference type="ChEBI" id="CHEBI:78442"/>
        <dbReference type="ChEBI" id="CHEBI:78527"/>
        <dbReference type="ChEBI" id="CHEBI:456215"/>
        <dbReference type="EC" id="6.1.1.21"/>
    </reaction>
</comment>
<comment type="subunit">
    <text evidence="1">Homodimer.</text>
</comment>
<comment type="subcellular location">
    <subcellularLocation>
        <location evidence="1">Cytoplasm</location>
    </subcellularLocation>
</comment>
<comment type="similarity">
    <text evidence="2">Belongs to the class-II aminoacyl-tRNA synthetase family.</text>
</comment>
<feature type="chain" id="PRO_0000136122" description="Histidine--tRNA ligase">
    <location>
        <begin position="1"/>
        <end position="506"/>
    </location>
</feature>
<accession>Q89DI2</accession>
<keyword id="KW-0030">Aminoacyl-tRNA synthetase</keyword>
<keyword id="KW-0067">ATP-binding</keyword>
<keyword id="KW-0963">Cytoplasm</keyword>
<keyword id="KW-0436">Ligase</keyword>
<keyword id="KW-0547">Nucleotide-binding</keyword>
<keyword id="KW-0648">Protein biosynthesis</keyword>
<keyword id="KW-1185">Reference proteome</keyword>
<protein>
    <recommendedName>
        <fullName>Histidine--tRNA ligase</fullName>
        <ecNumber>6.1.1.21</ecNumber>
    </recommendedName>
    <alternativeName>
        <fullName>Histidyl-tRNA synthetase</fullName>
        <shortName>HisRS</shortName>
    </alternativeName>
</protein>
<reference key="1">
    <citation type="journal article" date="2002" name="DNA Res.">
        <title>Complete genomic sequence of nitrogen-fixing symbiotic bacterium Bradyrhizobium japonicum USDA110.</title>
        <authorList>
            <person name="Kaneko T."/>
            <person name="Nakamura Y."/>
            <person name="Sato S."/>
            <person name="Minamisawa K."/>
            <person name="Uchiumi T."/>
            <person name="Sasamoto S."/>
            <person name="Watanabe A."/>
            <person name="Idesawa K."/>
            <person name="Iriguchi M."/>
            <person name="Kawashima K."/>
            <person name="Kohara M."/>
            <person name="Matsumoto M."/>
            <person name="Shimpo S."/>
            <person name="Tsuruoka H."/>
            <person name="Wada T."/>
            <person name="Yamada M."/>
            <person name="Tabata S."/>
        </authorList>
    </citation>
    <scope>NUCLEOTIDE SEQUENCE [LARGE SCALE GENOMIC DNA]</scope>
    <source>
        <strain>JCM 10833 / BCRC 13528 / IAM 13628 / NBRC 14792 / USDA 110</strain>
    </source>
</reference>